<sequence>MAPAADMTTAPTGVRSDEPPASAFSKPGGGLPVAAAMGGEEESDKPKVSPSPLPFSVEALMADRRKPPGGRDGPEGSGPPLGSARANLGALTTEAPTSPLPLGGHFPSVGALGKLPEDALLKAESPEKPERSPWMQSPRFSPPPPRRLSPPACTLRKHKTNRKPRTPFTTAQLLALERKFRQKQYLSIAERAEFSSSLSLTETQVKIWFQNRRAKAKRLQEAELEKLKMAAKPMLPPAAFGISFPLGGPAVAGASLYGASSPFQRAGLPVAPVGLYTAHVGYSMYHLT</sequence>
<name>HMGX7_CHICK</name>
<reference key="1">
    <citation type="journal article" date="1992" name="Biochem. Biophys. Res. Commun.">
        <title>Differential expression of two msh-related homeobox genes Chox-7 and Chox-8 during chick limb development.</title>
        <authorList>
            <person name="Nohno T."/>
            <person name="Noji S."/>
            <person name="Koyama E."/>
            <person name="Nishikawa K."/>
            <person name="Myokai F."/>
            <person name="Saito T."/>
            <person name="Taniguchi S."/>
        </authorList>
    </citation>
    <scope>NUCLEOTIDE SEQUENCE [MRNA]</scope>
    <source>
        <strain>White leghorn</strain>
        <tissue>Limb bud</tissue>
    </source>
</reference>
<reference key="2">
    <citation type="journal article" date="1992" name="Differentiation">
        <title>GHox-7: a chicken homeobox-containing gene expressed in a fashion consistent with a role in patterning events during embryonic chick limb development.</title>
        <authorList>
            <person name="Coelho C.N.D."/>
            <person name="Sumoy L."/>
            <person name="Kosher R.A."/>
            <person name="Upholt W.B."/>
        </authorList>
    </citation>
    <scope>NUCLEOTIDE SEQUENCE [MRNA] OF 130-288</scope>
    <source>
        <tissue>Limb bud</tissue>
    </source>
</reference>
<reference key="3">
    <citation type="journal article" date="1991" name="Genes Dev.">
        <title>The apical ectodermal ridge regulates Hox-7 and Hox-8 gene expression in developing chick limb buds.</title>
        <authorList>
            <person name="Robert B."/>
            <person name="Lyons G."/>
            <person name="Simandl B.K."/>
            <person name="Kuroiwa A."/>
            <person name="Buckingham M."/>
        </authorList>
    </citation>
    <scope>TISSUE SPECIFICITY</scope>
</reference>
<gene>
    <name type="primary">GHOX-7</name>
</gene>
<feature type="chain" id="PRO_0000049081" description="Homeobox protein GHOX-7">
    <location>
        <begin position="1"/>
        <end position="288"/>
    </location>
</feature>
<feature type="DNA-binding region" description="Homeobox" evidence="1">
    <location>
        <begin position="161"/>
        <end position="220"/>
    </location>
</feature>
<feature type="region of interest" description="Disordered" evidence="2">
    <location>
        <begin position="1"/>
        <end position="111"/>
    </location>
</feature>
<feature type="region of interest" description="Disordered" evidence="2">
    <location>
        <begin position="123"/>
        <end position="152"/>
    </location>
</feature>
<feature type="compositionally biased region" description="Low complexity" evidence="2">
    <location>
        <begin position="1"/>
        <end position="12"/>
    </location>
</feature>
<feature type="sequence variant" description="In GHOX-7D.">
    <original>G</original>
    <variation>S</variation>
    <location>
        <position position="247"/>
    </location>
</feature>
<feature type="sequence conflict" description="In Ref. 2; CAA46671." evidence="3" ref="2">
    <original>E</original>
    <variation>G</variation>
    <location>
        <position position="130"/>
    </location>
</feature>
<comment type="function">
    <text>Probably plays a role in patterning events during embryonic limb development. May also be involved in programmed cell death.</text>
</comment>
<comment type="subcellular location">
    <subcellularLocation>
        <location evidence="3">Nucleus</location>
    </subcellularLocation>
</comment>
<comment type="developmental stage">
    <text>Early limb development. First present in an asymmetric arc extending from the anterior border of the limb bud to the mesenchymal cells directly adjacent to the AER. Later abundantly expressed in the proximal anterior periphery and in the mid-proximal region of the posterior periphery. In older wing buds, detectable throughout the necrotic mesenchyme between the developing digits.</text>
</comment>
<comment type="similarity">
    <text evidence="3">Belongs to the Msh homeobox family.</text>
</comment>
<organism>
    <name type="scientific">Gallus gallus</name>
    <name type="common">Chicken</name>
    <dbReference type="NCBI Taxonomy" id="9031"/>
    <lineage>
        <taxon>Eukaryota</taxon>
        <taxon>Metazoa</taxon>
        <taxon>Chordata</taxon>
        <taxon>Craniata</taxon>
        <taxon>Vertebrata</taxon>
        <taxon>Euteleostomi</taxon>
        <taxon>Archelosauria</taxon>
        <taxon>Archosauria</taxon>
        <taxon>Dinosauria</taxon>
        <taxon>Saurischia</taxon>
        <taxon>Theropoda</taxon>
        <taxon>Coelurosauria</taxon>
        <taxon>Aves</taxon>
        <taxon>Neognathae</taxon>
        <taxon>Galloanserae</taxon>
        <taxon>Galliformes</taxon>
        <taxon>Phasianidae</taxon>
        <taxon>Phasianinae</taxon>
        <taxon>Gallus</taxon>
    </lineage>
</organism>
<dbReference type="EMBL" id="D10372">
    <property type="protein sequence ID" value="BAA01209.1"/>
    <property type="molecule type" value="mRNA"/>
</dbReference>
<dbReference type="EMBL" id="X65791">
    <property type="protein sequence ID" value="CAA46671.1"/>
    <property type="molecule type" value="mRNA"/>
</dbReference>
<dbReference type="PIR" id="JS0659">
    <property type="entry name" value="JS0659"/>
</dbReference>
<dbReference type="RefSeq" id="NP_990819.1">
    <property type="nucleotide sequence ID" value="NM_205488.2"/>
</dbReference>
<dbReference type="SMR" id="P50223"/>
<dbReference type="FunCoup" id="P50223">
    <property type="interactions" value="184"/>
</dbReference>
<dbReference type="STRING" id="9031.ENSGALP00000024163"/>
<dbReference type="PaxDb" id="9031-ENSGALP00000024163"/>
<dbReference type="Ensembl" id="ENSGALT00010026647.1">
    <property type="protein sequence ID" value="ENSGALP00010015198.1"/>
    <property type="gene ID" value="ENSGALG00010011141.1"/>
</dbReference>
<dbReference type="GeneID" id="396484"/>
<dbReference type="KEGG" id="gga:396484"/>
<dbReference type="CTD" id="4487"/>
<dbReference type="VEuPathDB" id="HostDB:geneid_396484"/>
<dbReference type="eggNOG" id="KOG0492">
    <property type="taxonomic scope" value="Eukaryota"/>
</dbReference>
<dbReference type="GeneTree" id="ENSGT00940000161623"/>
<dbReference type="HOGENOM" id="CLU_072675_1_0_1"/>
<dbReference type="InParanoid" id="P50223"/>
<dbReference type="OMA" id="WMQTPRF"/>
<dbReference type="OrthoDB" id="6159439at2759"/>
<dbReference type="PhylomeDB" id="P50223"/>
<dbReference type="TreeFam" id="TF350699"/>
<dbReference type="PRO" id="PR:P50223"/>
<dbReference type="Proteomes" id="UP000000539">
    <property type="component" value="Chromosome 4"/>
</dbReference>
<dbReference type="Bgee" id="ENSGALG00000015013">
    <property type="expression patterns" value="Expressed in cerebellum and 1 other cell type or tissue"/>
</dbReference>
<dbReference type="GO" id="GO:0034399">
    <property type="term" value="C:nuclear periphery"/>
    <property type="evidence" value="ECO:0007669"/>
    <property type="project" value="Ensembl"/>
</dbReference>
<dbReference type="GO" id="GO:0005654">
    <property type="term" value="C:nucleoplasm"/>
    <property type="evidence" value="ECO:0007669"/>
    <property type="project" value="Ensembl"/>
</dbReference>
<dbReference type="GO" id="GO:0005634">
    <property type="term" value="C:nucleus"/>
    <property type="evidence" value="ECO:0000318"/>
    <property type="project" value="GO_Central"/>
</dbReference>
<dbReference type="GO" id="GO:0005667">
    <property type="term" value="C:transcription regulator complex"/>
    <property type="evidence" value="ECO:0007669"/>
    <property type="project" value="Ensembl"/>
</dbReference>
<dbReference type="GO" id="GO:0000987">
    <property type="term" value="F:cis-regulatory region sequence-specific DNA binding"/>
    <property type="evidence" value="ECO:0007669"/>
    <property type="project" value="Ensembl"/>
</dbReference>
<dbReference type="GO" id="GO:0001228">
    <property type="term" value="F:DNA-binding transcription activator activity, RNA polymerase II-specific"/>
    <property type="evidence" value="ECO:0007669"/>
    <property type="project" value="Ensembl"/>
</dbReference>
<dbReference type="GO" id="GO:0000981">
    <property type="term" value="F:DNA-binding transcription factor activity, RNA polymerase II-specific"/>
    <property type="evidence" value="ECO:0000318"/>
    <property type="project" value="GO_Central"/>
</dbReference>
<dbReference type="GO" id="GO:0001227">
    <property type="term" value="F:DNA-binding transcription repressor activity, RNA polymerase II-specific"/>
    <property type="evidence" value="ECO:0007669"/>
    <property type="project" value="Ensembl"/>
</dbReference>
<dbReference type="GO" id="GO:0002039">
    <property type="term" value="F:p53 binding"/>
    <property type="evidence" value="ECO:0007669"/>
    <property type="project" value="Ensembl"/>
</dbReference>
<dbReference type="GO" id="GO:0000977">
    <property type="term" value="F:RNA polymerase II transcription regulatory region sequence-specific DNA binding"/>
    <property type="evidence" value="ECO:0000318"/>
    <property type="project" value="GO_Central"/>
</dbReference>
<dbReference type="GO" id="GO:0090427">
    <property type="term" value="P:activation of meiosis"/>
    <property type="evidence" value="ECO:0007669"/>
    <property type="project" value="Ensembl"/>
</dbReference>
<dbReference type="GO" id="GO:0009952">
    <property type="term" value="P:anterior/posterior pattern specification"/>
    <property type="evidence" value="ECO:0007669"/>
    <property type="project" value="Ensembl"/>
</dbReference>
<dbReference type="GO" id="GO:0030509">
    <property type="term" value="P:BMP signaling pathway"/>
    <property type="evidence" value="ECO:0007669"/>
    <property type="project" value="Ensembl"/>
</dbReference>
<dbReference type="GO" id="GO:0060349">
    <property type="term" value="P:bone morphogenesis"/>
    <property type="evidence" value="ECO:0007669"/>
    <property type="project" value="Ensembl"/>
</dbReference>
<dbReference type="GO" id="GO:0060536">
    <property type="term" value="P:cartilage morphogenesis"/>
    <property type="evidence" value="ECO:0007669"/>
    <property type="project" value="Ensembl"/>
</dbReference>
<dbReference type="GO" id="GO:0000902">
    <property type="term" value="P:cell morphogenesis"/>
    <property type="evidence" value="ECO:0007669"/>
    <property type="project" value="Ensembl"/>
</dbReference>
<dbReference type="GO" id="GO:0061311">
    <property type="term" value="P:cell surface receptor signaling pathway involved in heart development"/>
    <property type="evidence" value="ECO:0007669"/>
    <property type="project" value="Ensembl"/>
</dbReference>
<dbReference type="GO" id="GO:0035115">
    <property type="term" value="P:embryonic forelimb morphogenesis"/>
    <property type="evidence" value="ECO:0007669"/>
    <property type="project" value="Ensembl"/>
</dbReference>
<dbReference type="GO" id="GO:0035116">
    <property type="term" value="P:embryonic hindlimb morphogenesis"/>
    <property type="evidence" value="ECO:0007669"/>
    <property type="project" value="Ensembl"/>
</dbReference>
<dbReference type="GO" id="GO:0048598">
    <property type="term" value="P:embryonic morphogenesis"/>
    <property type="evidence" value="ECO:0000318"/>
    <property type="project" value="GO_Central"/>
</dbReference>
<dbReference type="GO" id="GO:0035880">
    <property type="term" value="P:embryonic nail plate morphogenesis"/>
    <property type="evidence" value="ECO:0007669"/>
    <property type="project" value="Ensembl"/>
</dbReference>
<dbReference type="GO" id="GO:0003198">
    <property type="term" value="P:epithelial to mesenchymal transition involved in endocardial cushion formation"/>
    <property type="evidence" value="ECO:0007669"/>
    <property type="project" value="Ensembl"/>
</dbReference>
<dbReference type="GO" id="GO:0060325">
    <property type="term" value="P:face morphogenesis"/>
    <property type="evidence" value="ECO:0007669"/>
    <property type="project" value="Ensembl"/>
</dbReference>
<dbReference type="GO" id="GO:0030900">
    <property type="term" value="P:forebrain development"/>
    <property type="evidence" value="ECO:0007669"/>
    <property type="project" value="Ensembl"/>
</dbReference>
<dbReference type="GO" id="GO:0048839">
    <property type="term" value="P:inner ear development"/>
    <property type="evidence" value="ECO:0007669"/>
    <property type="project" value="Ensembl"/>
</dbReference>
<dbReference type="GO" id="GO:0097152">
    <property type="term" value="P:mesenchymal cell apoptotic process"/>
    <property type="evidence" value="ECO:0007669"/>
    <property type="project" value="Ensembl"/>
</dbReference>
<dbReference type="GO" id="GO:0010463">
    <property type="term" value="P:mesenchymal cell proliferation"/>
    <property type="evidence" value="ECO:0007669"/>
    <property type="project" value="Ensembl"/>
</dbReference>
<dbReference type="GO" id="GO:0030901">
    <property type="term" value="P:midbrain development"/>
    <property type="evidence" value="ECO:0007669"/>
    <property type="project" value="Ensembl"/>
</dbReference>
<dbReference type="GO" id="GO:0042474">
    <property type="term" value="P:middle ear morphogenesis"/>
    <property type="evidence" value="ECO:0007669"/>
    <property type="project" value="Ensembl"/>
</dbReference>
<dbReference type="GO" id="GO:0007517">
    <property type="term" value="P:muscle organ development"/>
    <property type="evidence" value="ECO:0007669"/>
    <property type="project" value="Ensembl"/>
</dbReference>
<dbReference type="GO" id="GO:0043066">
    <property type="term" value="P:negative regulation of apoptotic process"/>
    <property type="evidence" value="ECO:0007669"/>
    <property type="project" value="Ensembl"/>
</dbReference>
<dbReference type="GO" id="GO:0030308">
    <property type="term" value="P:negative regulation of cell growth"/>
    <property type="evidence" value="ECO:0007669"/>
    <property type="project" value="Ensembl"/>
</dbReference>
<dbReference type="GO" id="GO:0008285">
    <property type="term" value="P:negative regulation of cell population proliferation"/>
    <property type="evidence" value="ECO:0007669"/>
    <property type="project" value="Ensembl"/>
</dbReference>
<dbReference type="GO" id="GO:0010629">
    <property type="term" value="P:negative regulation of gene expression"/>
    <property type="evidence" value="ECO:0007669"/>
    <property type="project" value="Ensembl"/>
</dbReference>
<dbReference type="GO" id="GO:1901330">
    <property type="term" value="P:negative regulation of odontoblast differentiation"/>
    <property type="evidence" value="ECO:0007669"/>
    <property type="project" value="Ensembl"/>
</dbReference>
<dbReference type="GO" id="GO:0051154">
    <property type="term" value="P:negative regulation of striated muscle cell differentiation"/>
    <property type="evidence" value="ECO:0007669"/>
    <property type="project" value="Ensembl"/>
</dbReference>
<dbReference type="GO" id="GO:0043584">
    <property type="term" value="P:nose development"/>
    <property type="evidence" value="ECO:0007669"/>
    <property type="project" value="Ensembl"/>
</dbReference>
<dbReference type="GO" id="GO:0030513">
    <property type="term" value="P:positive regulation of BMP signaling pathway"/>
    <property type="evidence" value="ECO:0007669"/>
    <property type="project" value="Ensembl"/>
</dbReference>
<dbReference type="GO" id="GO:1902255">
    <property type="term" value="P:positive regulation of intrinsic apoptotic signaling pathway by p53 class mediator"/>
    <property type="evidence" value="ECO:0007669"/>
    <property type="project" value="Ensembl"/>
</dbReference>
<dbReference type="GO" id="GO:2001055">
    <property type="term" value="P:positive regulation of mesenchymal cell apoptotic process"/>
    <property type="evidence" value="ECO:0007669"/>
    <property type="project" value="Ensembl"/>
</dbReference>
<dbReference type="GO" id="GO:0042482">
    <property type="term" value="P:positive regulation of odontogenesis"/>
    <property type="evidence" value="ECO:0007669"/>
    <property type="project" value="Ensembl"/>
</dbReference>
<dbReference type="GO" id="GO:0034504">
    <property type="term" value="P:protein localization to nucleus"/>
    <property type="evidence" value="ECO:0007669"/>
    <property type="project" value="Ensembl"/>
</dbReference>
<dbReference type="GO" id="GO:0050821">
    <property type="term" value="P:protein stabilization"/>
    <property type="evidence" value="ECO:0007669"/>
    <property type="project" value="Ensembl"/>
</dbReference>
<dbReference type="GO" id="GO:0006357">
    <property type="term" value="P:regulation of transcription by RNA polymerase II"/>
    <property type="evidence" value="ECO:0000318"/>
    <property type="project" value="GO_Central"/>
</dbReference>
<dbReference type="GO" id="GO:0060021">
    <property type="term" value="P:roof of mouth development"/>
    <property type="evidence" value="ECO:0007669"/>
    <property type="project" value="Ensembl"/>
</dbReference>
<dbReference type="GO" id="GO:0023019">
    <property type="term" value="P:signal transduction involved in regulation of gene expression"/>
    <property type="evidence" value="ECO:0007669"/>
    <property type="project" value="Ensembl"/>
</dbReference>
<dbReference type="GO" id="GO:0048863">
    <property type="term" value="P:stem cell differentiation"/>
    <property type="evidence" value="ECO:0007669"/>
    <property type="project" value="Ensembl"/>
</dbReference>
<dbReference type="GO" id="GO:0006366">
    <property type="term" value="P:transcription by RNA polymerase II"/>
    <property type="evidence" value="ECO:0007669"/>
    <property type="project" value="Ensembl"/>
</dbReference>
<dbReference type="CDD" id="cd00086">
    <property type="entry name" value="homeodomain"/>
    <property type="match status" value="1"/>
</dbReference>
<dbReference type="FunFam" id="1.10.10.60:FF:000134">
    <property type="entry name" value="Homeobox protein MSX-1"/>
    <property type="match status" value="1"/>
</dbReference>
<dbReference type="Gene3D" id="1.10.10.60">
    <property type="entry name" value="Homeodomain-like"/>
    <property type="match status" value="1"/>
</dbReference>
<dbReference type="InterPro" id="IPR001356">
    <property type="entry name" value="HD"/>
</dbReference>
<dbReference type="InterPro" id="IPR020479">
    <property type="entry name" value="HD_metazoa"/>
</dbReference>
<dbReference type="InterPro" id="IPR017970">
    <property type="entry name" value="Homeobox_CS"/>
</dbReference>
<dbReference type="InterPro" id="IPR009057">
    <property type="entry name" value="Homeodomain-like_sf"/>
</dbReference>
<dbReference type="InterPro" id="IPR050674">
    <property type="entry name" value="Msh_Homeobox_Regulators"/>
</dbReference>
<dbReference type="PANTHER" id="PTHR24338">
    <property type="entry name" value="HOMEOBOX PROTEIN MSX"/>
    <property type="match status" value="1"/>
</dbReference>
<dbReference type="PANTHER" id="PTHR24338:SF8">
    <property type="entry name" value="HOMEOBOX PROTEIN MSX-1"/>
    <property type="match status" value="1"/>
</dbReference>
<dbReference type="Pfam" id="PF00046">
    <property type="entry name" value="Homeodomain"/>
    <property type="match status" value="1"/>
</dbReference>
<dbReference type="PRINTS" id="PR00024">
    <property type="entry name" value="HOMEOBOX"/>
</dbReference>
<dbReference type="SMART" id="SM00389">
    <property type="entry name" value="HOX"/>
    <property type="match status" value="1"/>
</dbReference>
<dbReference type="SUPFAM" id="SSF46689">
    <property type="entry name" value="Homeodomain-like"/>
    <property type="match status" value="1"/>
</dbReference>
<dbReference type="PROSITE" id="PS00027">
    <property type="entry name" value="HOMEOBOX_1"/>
    <property type="match status" value="1"/>
</dbReference>
<dbReference type="PROSITE" id="PS50071">
    <property type="entry name" value="HOMEOBOX_2"/>
    <property type="match status" value="1"/>
</dbReference>
<accession>P50223</accession>
<evidence type="ECO:0000255" key="1">
    <source>
        <dbReference type="PROSITE-ProRule" id="PRU00108"/>
    </source>
</evidence>
<evidence type="ECO:0000256" key="2">
    <source>
        <dbReference type="SAM" id="MobiDB-lite"/>
    </source>
</evidence>
<evidence type="ECO:0000305" key="3"/>
<keyword id="KW-0217">Developmental protein</keyword>
<keyword id="KW-0238">DNA-binding</keyword>
<keyword id="KW-0371">Homeobox</keyword>
<keyword id="KW-0539">Nucleus</keyword>
<keyword id="KW-1185">Reference proteome</keyword>
<protein>
    <recommendedName>
        <fullName>Homeobox protein GHOX-7</fullName>
    </recommendedName>
    <alternativeName>
        <fullName>CHOX-7</fullName>
        <shortName>Hox-7</shortName>
    </alternativeName>
</protein>
<proteinExistence type="evidence at transcript level"/>